<gene>
    <name evidence="1" type="primary">pcrB</name>
    <name type="ordered locus">SAHV_1891</name>
</gene>
<reference key="1">
    <citation type="journal article" date="2008" name="Antimicrob. Agents Chemother.">
        <title>Mutated response regulator graR is responsible for phenotypic conversion of Staphylococcus aureus from heterogeneous vancomycin-intermediate resistance to vancomycin-intermediate resistance.</title>
        <authorList>
            <person name="Neoh H.-M."/>
            <person name="Cui L."/>
            <person name="Yuzawa H."/>
            <person name="Takeuchi F."/>
            <person name="Matsuo M."/>
            <person name="Hiramatsu K."/>
        </authorList>
    </citation>
    <scope>NUCLEOTIDE SEQUENCE [LARGE SCALE GENOMIC DNA]</scope>
    <source>
        <strain>Mu3 / ATCC 700698</strain>
    </source>
</reference>
<feature type="chain" id="PRO_1000015168" description="Heptaprenylglyceryl phosphate synthase">
    <location>
        <begin position="1"/>
        <end position="230"/>
    </location>
</feature>
<feature type="binding site" evidence="1">
    <location>
        <position position="12"/>
    </location>
    <ligand>
        <name>sn-glycerol 1-phosphate</name>
        <dbReference type="ChEBI" id="CHEBI:57685"/>
    </ligand>
</feature>
<feature type="binding site" evidence="1">
    <location>
        <position position="14"/>
    </location>
    <ligand>
        <name>Mg(2+)</name>
        <dbReference type="ChEBI" id="CHEBI:18420"/>
    </ligand>
</feature>
<feature type="binding site" evidence="1">
    <location>
        <position position="40"/>
    </location>
    <ligand>
        <name>Mg(2+)</name>
        <dbReference type="ChEBI" id="CHEBI:18420"/>
    </ligand>
</feature>
<feature type="binding site" evidence="1">
    <location>
        <begin position="159"/>
        <end position="164"/>
    </location>
    <ligand>
        <name>sn-glycerol 1-phosphate</name>
        <dbReference type="ChEBI" id="CHEBI:57685"/>
    </ligand>
</feature>
<feature type="binding site" evidence="1">
    <location>
        <position position="189"/>
    </location>
    <ligand>
        <name>sn-glycerol 1-phosphate</name>
        <dbReference type="ChEBI" id="CHEBI:57685"/>
    </ligand>
</feature>
<feature type="binding site" evidence="1">
    <location>
        <begin position="209"/>
        <end position="210"/>
    </location>
    <ligand>
        <name>sn-glycerol 1-phosphate</name>
        <dbReference type="ChEBI" id="CHEBI:57685"/>
    </ligand>
</feature>
<feature type="helix" evidence="2">
    <location>
        <begin position="1"/>
        <end position="5"/>
    </location>
</feature>
<feature type="strand" evidence="2">
    <location>
        <begin position="9"/>
        <end position="13"/>
    </location>
</feature>
<feature type="helix" evidence="2">
    <location>
        <begin position="21"/>
        <end position="28"/>
    </location>
</feature>
<feature type="strand" evidence="2">
    <location>
        <begin position="33"/>
        <end position="37"/>
    </location>
</feature>
<feature type="helix" evidence="2">
    <location>
        <begin position="45"/>
        <end position="55"/>
    </location>
</feature>
<feature type="strand" evidence="2">
    <location>
        <begin position="62"/>
        <end position="65"/>
    </location>
</feature>
<feature type="turn" evidence="3">
    <location>
        <begin position="69"/>
        <end position="71"/>
    </location>
</feature>
<feature type="strand" evidence="2">
    <location>
        <begin position="77"/>
        <end position="84"/>
    </location>
</feature>
<feature type="strand" evidence="2">
    <location>
        <begin position="87"/>
        <end position="89"/>
    </location>
</feature>
<feature type="turn" evidence="2">
    <location>
        <begin position="90"/>
        <end position="94"/>
    </location>
</feature>
<feature type="helix" evidence="2">
    <location>
        <begin position="95"/>
        <end position="104"/>
    </location>
</feature>
<feature type="helix" evidence="2">
    <location>
        <begin position="105"/>
        <end position="107"/>
    </location>
</feature>
<feature type="helix" evidence="2">
    <location>
        <begin position="110"/>
        <end position="112"/>
    </location>
</feature>
<feature type="strand" evidence="2">
    <location>
        <begin position="113"/>
        <end position="120"/>
    </location>
</feature>
<feature type="strand" evidence="2">
    <location>
        <begin position="123"/>
        <end position="125"/>
    </location>
</feature>
<feature type="helix" evidence="2">
    <location>
        <begin position="126"/>
        <end position="130"/>
    </location>
</feature>
<feature type="helix" evidence="2">
    <location>
        <begin position="139"/>
        <end position="151"/>
    </location>
</feature>
<feature type="strand" evidence="2">
    <location>
        <begin position="156"/>
        <end position="161"/>
    </location>
</feature>
<feature type="helix" evidence="2">
    <location>
        <begin position="169"/>
        <end position="176"/>
    </location>
</feature>
<feature type="strand" evidence="2">
    <location>
        <begin position="180"/>
        <end position="188"/>
    </location>
</feature>
<feature type="helix" evidence="2">
    <location>
        <begin position="193"/>
        <end position="200"/>
    </location>
</feature>
<feature type="strand" evidence="2">
    <location>
        <begin position="203"/>
        <end position="208"/>
    </location>
</feature>
<feature type="helix" evidence="2">
    <location>
        <begin position="211"/>
        <end position="214"/>
    </location>
</feature>
<feature type="helix" evidence="2">
    <location>
        <begin position="216"/>
        <end position="221"/>
    </location>
</feature>
<accession>A7X435</accession>
<keyword id="KW-0002">3D-structure</keyword>
<keyword id="KW-0444">Lipid biosynthesis</keyword>
<keyword id="KW-0443">Lipid metabolism</keyword>
<keyword id="KW-0460">Magnesium</keyword>
<keyword id="KW-0479">Metal-binding</keyword>
<keyword id="KW-0594">Phospholipid biosynthesis</keyword>
<keyword id="KW-1208">Phospholipid metabolism</keyword>
<keyword id="KW-0808">Transferase</keyword>
<organism>
    <name type="scientific">Staphylococcus aureus (strain Mu3 / ATCC 700698)</name>
    <dbReference type="NCBI Taxonomy" id="418127"/>
    <lineage>
        <taxon>Bacteria</taxon>
        <taxon>Bacillati</taxon>
        <taxon>Bacillota</taxon>
        <taxon>Bacilli</taxon>
        <taxon>Bacillales</taxon>
        <taxon>Staphylococcaceae</taxon>
        <taxon>Staphylococcus</taxon>
    </lineage>
</organism>
<dbReference type="EC" id="2.5.1.n9" evidence="1"/>
<dbReference type="EMBL" id="AP009324">
    <property type="protein sequence ID" value="BAF78774.1"/>
    <property type="molecule type" value="Genomic_DNA"/>
</dbReference>
<dbReference type="RefSeq" id="WP_000272054.1">
    <property type="nucleotide sequence ID" value="NC_009782.1"/>
</dbReference>
<dbReference type="PDB" id="3W01">
    <property type="method" value="X-ray"/>
    <property type="resolution" value="1.54 A"/>
    <property type="chains" value="A/B=1-230"/>
</dbReference>
<dbReference type="PDB" id="3W02">
    <property type="method" value="X-ray"/>
    <property type="resolution" value="2.98 A"/>
    <property type="chains" value="A/B=1-230"/>
</dbReference>
<dbReference type="PDBsum" id="3W01"/>
<dbReference type="PDBsum" id="3W02"/>
<dbReference type="SMR" id="A7X435"/>
<dbReference type="KEGG" id="saw:SAHV_1891"/>
<dbReference type="HOGENOM" id="CLU_095211_0_0_9"/>
<dbReference type="UniPathway" id="UPA00940"/>
<dbReference type="EvolutionaryTrace" id="A7X435"/>
<dbReference type="GO" id="GO:0120536">
    <property type="term" value="F:heptaprenylglyceryl phosphate synthase activity"/>
    <property type="evidence" value="ECO:0007669"/>
    <property type="project" value="RHEA"/>
</dbReference>
<dbReference type="GO" id="GO:0000287">
    <property type="term" value="F:magnesium ion binding"/>
    <property type="evidence" value="ECO:0007669"/>
    <property type="project" value="UniProtKB-UniRule"/>
</dbReference>
<dbReference type="GO" id="GO:0046474">
    <property type="term" value="P:glycerophospholipid biosynthetic process"/>
    <property type="evidence" value="ECO:0007669"/>
    <property type="project" value="UniProtKB-UniRule"/>
</dbReference>
<dbReference type="CDD" id="cd02812">
    <property type="entry name" value="PcrB_like"/>
    <property type="match status" value="1"/>
</dbReference>
<dbReference type="FunFam" id="3.20.20.390:FF:000001">
    <property type="entry name" value="Heptaprenylglyceryl phosphate synthase"/>
    <property type="match status" value="1"/>
</dbReference>
<dbReference type="Gene3D" id="3.20.20.390">
    <property type="entry name" value="FMN-linked oxidoreductases"/>
    <property type="match status" value="1"/>
</dbReference>
<dbReference type="HAMAP" id="MF_00112">
    <property type="entry name" value="GGGP_HepGP_synthase"/>
    <property type="match status" value="1"/>
</dbReference>
<dbReference type="InterPro" id="IPR039074">
    <property type="entry name" value="GGGP/HepGP_synthase_I"/>
</dbReference>
<dbReference type="InterPro" id="IPR038597">
    <property type="entry name" value="GGGP/HepGP_synthase_sf"/>
</dbReference>
<dbReference type="InterPro" id="IPR008205">
    <property type="entry name" value="GGGP_HepGP_synthase"/>
</dbReference>
<dbReference type="NCBIfam" id="TIGR01768">
    <property type="entry name" value="GGGP-family"/>
    <property type="match status" value="1"/>
</dbReference>
<dbReference type="NCBIfam" id="NF003197">
    <property type="entry name" value="PRK04169.1-1"/>
    <property type="match status" value="1"/>
</dbReference>
<dbReference type="NCBIfam" id="NF003199">
    <property type="entry name" value="PRK04169.1-3"/>
    <property type="match status" value="1"/>
</dbReference>
<dbReference type="NCBIfam" id="NF003200">
    <property type="entry name" value="PRK04169.1-4"/>
    <property type="match status" value="1"/>
</dbReference>
<dbReference type="PANTHER" id="PTHR40029">
    <property type="match status" value="1"/>
</dbReference>
<dbReference type="PANTHER" id="PTHR40029:SF2">
    <property type="entry name" value="HEPTAPRENYLGLYCERYL PHOSPHATE SYNTHASE"/>
    <property type="match status" value="1"/>
</dbReference>
<dbReference type="Pfam" id="PF01884">
    <property type="entry name" value="PcrB"/>
    <property type="match status" value="1"/>
</dbReference>
<dbReference type="SUPFAM" id="SSF51395">
    <property type="entry name" value="FMN-linked oxidoreductases"/>
    <property type="match status" value="1"/>
</dbReference>
<comment type="function">
    <text evidence="1">Prenyltransferase that catalyzes in vivo the transfer of the heptaprenyl moiety of heptaprenyl pyrophosphate (HepPP; 35 carbon atoms) to the C3 hydroxyl of sn-glycerol-1-phosphate (G1P), producing heptaprenylglyceryl phosphate (HepGP). This reaction is an ether-bond-formation step in the biosynthesis of archaea-type G1P-based membrane lipids found in Bacillales.</text>
</comment>
<comment type="catalytic activity">
    <reaction evidence="1">
        <text>sn-glycerol 1-phosphate + all-trans-heptaprenyl diphosphate = 3-heptaprenyl-sn-glycero-1-phosphate + diphosphate</text>
        <dbReference type="Rhea" id="RHEA:33495"/>
        <dbReference type="ChEBI" id="CHEBI:33019"/>
        <dbReference type="ChEBI" id="CHEBI:57685"/>
        <dbReference type="ChEBI" id="CHEBI:58206"/>
        <dbReference type="ChEBI" id="CHEBI:64781"/>
        <dbReference type="EC" id="2.5.1.n9"/>
    </reaction>
</comment>
<comment type="cofactor">
    <cofactor evidence="1">
        <name>Mg(2+)</name>
        <dbReference type="ChEBI" id="CHEBI:18420"/>
    </cofactor>
</comment>
<comment type="pathway">
    <text evidence="1">Membrane lipid metabolism; glycerophospholipid metabolism.</text>
</comment>
<comment type="subunit">
    <text evidence="1">Homodimer.</text>
</comment>
<comment type="similarity">
    <text evidence="1">Belongs to the GGGP/HepGP synthase family. Group I subfamily.</text>
</comment>
<sequence length="230" mass="25847">MYDIKKWRHIFKLDPAKHISDDDLDAICMSQTDAIMIGGTDDVTEDNVIHLMSKIRRYPLPLVLEISNIESVMPGFDFYFVPTVLNSTDVAFHNGTLLEALKTYGHSIDFEEVIFEGYVVCNADSKVAKHTKANTDLTTEDLEAYAQMVNHMYRLPVMYIEYSGIYGDVSKVQAVSEHLTETQLFYGGGISSEQQATEMAAIADTIIVGDIIYKDIKKALKTVKIKESSK</sequence>
<name>PCRB_STAA1</name>
<proteinExistence type="evidence at protein level"/>
<evidence type="ECO:0000255" key="1">
    <source>
        <dbReference type="HAMAP-Rule" id="MF_00112"/>
    </source>
</evidence>
<evidence type="ECO:0007829" key="2">
    <source>
        <dbReference type="PDB" id="3W01"/>
    </source>
</evidence>
<evidence type="ECO:0007829" key="3">
    <source>
        <dbReference type="PDB" id="3W02"/>
    </source>
</evidence>
<protein>
    <recommendedName>
        <fullName evidence="1">Heptaprenylglyceryl phosphate synthase</fullName>
        <shortName evidence="1">HepGP synthase</shortName>
        <ecNumber evidence="1">2.5.1.n9</ecNumber>
    </recommendedName>
    <alternativeName>
        <fullName evidence="1">Glycerol-1-phosphate heptaprenyltransferase</fullName>
    </alternativeName>
</protein>